<comment type="similarity">
    <text evidence="1">To B.subtilis XtrA.</text>
</comment>
<keyword id="KW-1185">Reference proteome</keyword>
<name>YQAO_BACSU</name>
<evidence type="ECO:0000305" key="1"/>
<protein>
    <recommendedName>
        <fullName>Uncharacterized protein YqaO</fullName>
    </recommendedName>
</protein>
<gene>
    <name type="primary">yqaO</name>
    <name type="ordered locus">BSU26240</name>
</gene>
<feature type="chain" id="PRO_0000049746" description="Uncharacterized protein YqaO">
    <location>
        <begin position="1"/>
        <end position="68"/>
    </location>
</feature>
<accession>P45912</accession>
<proteinExistence type="predicted"/>
<sequence>MYNPREINIKKDFTIQQKIDPGKVQIIVLDGNQGTAHVLDAPEHGKTVIQTVKGSFARVDHEIGFKVK</sequence>
<organism>
    <name type="scientific">Bacillus subtilis (strain 168)</name>
    <dbReference type="NCBI Taxonomy" id="224308"/>
    <lineage>
        <taxon>Bacteria</taxon>
        <taxon>Bacillati</taxon>
        <taxon>Bacillota</taxon>
        <taxon>Bacilli</taxon>
        <taxon>Bacillales</taxon>
        <taxon>Bacillaceae</taxon>
        <taxon>Bacillus</taxon>
    </lineage>
</organism>
<reference key="1">
    <citation type="journal article" date="1995" name="Microbiology">
        <title>Complete nucleotide sequence of a skin element excised by DNA rearrangement during sporulation in Bacillus subtilis.</title>
        <authorList>
            <person name="Takemaru K."/>
            <person name="Mizuno M."/>
            <person name="Sato T."/>
            <person name="Takeuchi M."/>
            <person name="Kobayashi Y."/>
        </authorList>
    </citation>
    <scope>NUCLEOTIDE SEQUENCE [GENOMIC DNA]</scope>
    <source>
        <strain>168 / JH642</strain>
    </source>
</reference>
<reference key="2">
    <citation type="journal article" date="1996" name="Microbiology">
        <title>Systematic sequencing of the 283 kb 210 degrees-232 degrees region of the Bacillus subtilis genome containing the skin element and many sporulation genes.</title>
        <authorList>
            <person name="Mizuno M."/>
            <person name="Masuda S."/>
            <person name="Takemaru K."/>
            <person name="Hosono S."/>
            <person name="Sato T."/>
            <person name="Takeuchi M."/>
            <person name="Kobayashi Y."/>
        </authorList>
    </citation>
    <scope>NUCLEOTIDE SEQUENCE [GENOMIC DNA]</scope>
    <source>
        <strain>168 / JH642</strain>
    </source>
</reference>
<reference key="3">
    <citation type="journal article" date="1997" name="Nature">
        <title>The complete genome sequence of the Gram-positive bacterium Bacillus subtilis.</title>
        <authorList>
            <person name="Kunst F."/>
            <person name="Ogasawara N."/>
            <person name="Moszer I."/>
            <person name="Albertini A.M."/>
            <person name="Alloni G."/>
            <person name="Azevedo V."/>
            <person name="Bertero M.G."/>
            <person name="Bessieres P."/>
            <person name="Bolotin A."/>
            <person name="Borchert S."/>
            <person name="Borriss R."/>
            <person name="Boursier L."/>
            <person name="Brans A."/>
            <person name="Braun M."/>
            <person name="Brignell S.C."/>
            <person name="Bron S."/>
            <person name="Brouillet S."/>
            <person name="Bruschi C.V."/>
            <person name="Caldwell B."/>
            <person name="Capuano V."/>
            <person name="Carter N.M."/>
            <person name="Choi S.-K."/>
            <person name="Codani J.-J."/>
            <person name="Connerton I.F."/>
            <person name="Cummings N.J."/>
            <person name="Daniel R.A."/>
            <person name="Denizot F."/>
            <person name="Devine K.M."/>
            <person name="Duesterhoeft A."/>
            <person name="Ehrlich S.D."/>
            <person name="Emmerson P.T."/>
            <person name="Entian K.-D."/>
            <person name="Errington J."/>
            <person name="Fabret C."/>
            <person name="Ferrari E."/>
            <person name="Foulger D."/>
            <person name="Fritz C."/>
            <person name="Fujita M."/>
            <person name="Fujita Y."/>
            <person name="Fuma S."/>
            <person name="Galizzi A."/>
            <person name="Galleron N."/>
            <person name="Ghim S.-Y."/>
            <person name="Glaser P."/>
            <person name="Goffeau A."/>
            <person name="Golightly E.J."/>
            <person name="Grandi G."/>
            <person name="Guiseppi G."/>
            <person name="Guy B.J."/>
            <person name="Haga K."/>
            <person name="Haiech J."/>
            <person name="Harwood C.R."/>
            <person name="Henaut A."/>
            <person name="Hilbert H."/>
            <person name="Holsappel S."/>
            <person name="Hosono S."/>
            <person name="Hullo M.-F."/>
            <person name="Itaya M."/>
            <person name="Jones L.-M."/>
            <person name="Joris B."/>
            <person name="Karamata D."/>
            <person name="Kasahara Y."/>
            <person name="Klaerr-Blanchard M."/>
            <person name="Klein C."/>
            <person name="Kobayashi Y."/>
            <person name="Koetter P."/>
            <person name="Koningstein G."/>
            <person name="Krogh S."/>
            <person name="Kumano M."/>
            <person name="Kurita K."/>
            <person name="Lapidus A."/>
            <person name="Lardinois S."/>
            <person name="Lauber J."/>
            <person name="Lazarevic V."/>
            <person name="Lee S.-M."/>
            <person name="Levine A."/>
            <person name="Liu H."/>
            <person name="Masuda S."/>
            <person name="Mauel C."/>
            <person name="Medigue C."/>
            <person name="Medina N."/>
            <person name="Mellado R.P."/>
            <person name="Mizuno M."/>
            <person name="Moestl D."/>
            <person name="Nakai S."/>
            <person name="Noback M."/>
            <person name="Noone D."/>
            <person name="O'Reilly M."/>
            <person name="Ogawa K."/>
            <person name="Ogiwara A."/>
            <person name="Oudega B."/>
            <person name="Park S.-H."/>
            <person name="Parro V."/>
            <person name="Pohl T.M."/>
            <person name="Portetelle D."/>
            <person name="Porwollik S."/>
            <person name="Prescott A.M."/>
            <person name="Presecan E."/>
            <person name="Pujic P."/>
            <person name="Purnelle B."/>
            <person name="Rapoport G."/>
            <person name="Rey M."/>
            <person name="Reynolds S."/>
            <person name="Rieger M."/>
            <person name="Rivolta C."/>
            <person name="Rocha E."/>
            <person name="Roche B."/>
            <person name="Rose M."/>
            <person name="Sadaie Y."/>
            <person name="Sato T."/>
            <person name="Scanlan E."/>
            <person name="Schleich S."/>
            <person name="Schroeter R."/>
            <person name="Scoffone F."/>
            <person name="Sekiguchi J."/>
            <person name="Sekowska A."/>
            <person name="Seror S.J."/>
            <person name="Serror P."/>
            <person name="Shin B.-S."/>
            <person name="Soldo B."/>
            <person name="Sorokin A."/>
            <person name="Tacconi E."/>
            <person name="Takagi T."/>
            <person name="Takahashi H."/>
            <person name="Takemaru K."/>
            <person name="Takeuchi M."/>
            <person name="Tamakoshi A."/>
            <person name="Tanaka T."/>
            <person name="Terpstra P."/>
            <person name="Tognoni A."/>
            <person name="Tosato V."/>
            <person name="Uchiyama S."/>
            <person name="Vandenbol M."/>
            <person name="Vannier F."/>
            <person name="Vassarotti A."/>
            <person name="Viari A."/>
            <person name="Wambutt R."/>
            <person name="Wedler E."/>
            <person name="Wedler H."/>
            <person name="Weitzenegger T."/>
            <person name="Winters P."/>
            <person name="Wipat A."/>
            <person name="Yamamoto H."/>
            <person name="Yamane K."/>
            <person name="Yasumoto K."/>
            <person name="Yata K."/>
            <person name="Yoshida K."/>
            <person name="Yoshikawa H.-F."/>
            <person name="Zumstein E."/>
            <person name="Yoshikawa H."/>
            <person name="Danchin A."/>
        </authorList>
    </citation>
    <scope>NUCLEOTIDE SEQUENCE [LARGE SCALE GENOMIC DNA]</scope>
    <source>
        <strain>168</strain>
    </source>
</reference>
<reference key="4">
    <citation type="journal article" date="1995" name="Gene">
        <title>Analysis of a Bacillus subtilis genome fragment using a co-operative computer system prototype.</title>
        <authorList>
            <person name="Medigue C."/>
            <person name="Moszer I."/>
            <person name="Viari A."/>
            <person name="Danchin A."/>
        </authorList>
    </citation>
    <scope>IDENTIFICATION</scope>
</reference>
<dbReference type="EMBL" id="D32216">
    <property type="protein sequence ID" value="BAA21333.1"/>
    <property type="molecule type" value="Genomic_DNA"/>
</dbReference>
<dbReference type="EMBL" id="D84432">
    <property type="protein sequence ID" value="BAA12390.1"/>
    <property type="molecule type" value="Genomic_DNA"/>
</dbReference>
<dbReference type="EMBL" id="AL009126">
    <property type="protein sequence ID" value="CAB14565.1"/>
    <property type="molecule type" value="Genomic_DNA"/>
</dbReference>
<dbReference type="PIR" id="F69945">
    <property type="entry name" value="F69945"/>
</dbReference>
<dbReference type="RefSeq" id="NP_390501.1">
    <property type="nucleotide sequence ID" value="NC_000964.3"/>
</dbReference>
<dbReference type="RefSeq" id="WP_003229912.1">
    <property type="nucleotide sequence ID" value="NZ_OZ025638.1"/>
</dbReference>
<dbReference type="STRING" id="224308.BSU26240"/>
<dbReference type="PaxDb" id="224308-BSU26240"/>
<dbReference type="EnsemblBacteria" id="CAB14565">
    <property type="protein sequence ID" value="CAB14565"/>
    <property type="gene ID" value="BSU_26240"/>
</dbReference>
<dbReference type="GeneID" id="937706"/>
<dbReference type="KEGG" id="bsu:BSU26240"/>
<dbReference type="PATRIC" id="fig|224308.179.peg.2850"/>
<dbReference type="eggNOG" id="ENOG50320A3">
    <property type="taxonomic scope" value="Bacteria"/>
</dbReference>
<dbReference type="InParanoid" id="P45912"/>
<dbReference type="OrthoDB" id="2910404at2"/>
<dbReference type="BioCyc" id="BSUB:BSU26240-MONOMER"/>
<dbReference type="Proteomes" id="UP000001570">
    <property type="component" value="Chromosome"/>
</dbReference>
<dbReference type="InterPro" id="IPR035530">
    <property type="entry name" value="PBSX_XtrA"/>
</dbReference>
<dbReference type="Pfam" id="PF17356">
    <property type="entry name" value="PBSX_XtrA"/>
    <property type="match status" value="1"/>
</dbReference>